<organism>
    <name type="scientific">Variovorax paradoxus (strain S110)</name>
    <dbReference type="NCBI Taxonomy" id="543728"/>
    <lineage>
        <taxon>Bacteria</taxon>
        <taxon>Pseudomonadati</taxon>
        <taxon>Pseudomonadota</taxon>
        <taxon>Betaproteobacteria</taxon>
        <taxon>Burkholderiales</taxon>
        <taxon>Comamonadaceae</taxon>
        <taxon>Variovorax</taxon>
    </lineage>
</organism>
<feature type="chain" id="PRO_1000214821" description="ATP synthase subunit alpha">
    <location>
        <begin position="1"/>
        <end position="517"/>
    </location>
</feature>
<feature type="binding site" evidence="1">
    <location>
        <begin position="174"/>
        <end position="181"/>
    </location>
    <ligand>
        <name>ATP</name>
        <dbReference type="ChEBI" id="CHEBI:30616"/>
    </ligand>
</feature>
<feature type="site" description="Required for activity" evidence="1">
    <location>
        <position position="378"/>
    </location>
</feature>
<reference key="1">
    <citation type="journal article" date="2011" name="J. Bacteriol.">
        <title>Complete genome sequence of the metabolically versatile plant growth-promoting endophyte, Variovorax paradoxus S110.</title>
        <authorList>
            <person name="Han J.I."/>
            <person name="Choi H.K."/>
            <person name="Lee S.W."/>
            <person name="Orwin P.M."/>
            <person name="Kim J."/>
            <person name="Laroe S.L."/>
            <person name="Kim T.G."/>
            <person name="O'Neil J."/>
            <person name="Leadbetter J.R."/>
            <person name="Lee S.Y."/>
            <person name="Hur C.G."/>
            <person name="Spain J.C."/>
            <person name="Ovchinnikova G."/>
            <person name="Goodwin L."/>
            <person name="Han C."/>
        </authorList>
    </citation>
    <scope>NUCLEOTIDE SEQUENCE [LARGE SCALE GENOMIC DNA]</scope>
    <source>
        <strain>S110</strain>
    </source>
</reference>
<evidence type="ECO:0000255" key="1">
    <source>
        <dbReference type="HAMAP-Rule" id="MF_01346"/>
    </source>
</evidence>
<accession>C5CNB3</accession>
<comment type="function">
    <text evidence="1">Produces ATP from ADP in the presence of a proton gradient across the membrane. The alpha chain is a regulatory subunit.</text>
</comment>
<comment type="catalytic activity">
    <reaction evidence="1">
        <text>ATP + H2O + 4 H(+)(in) = ADP + phosphate + 5 H(+)(out)</text>
        <dbReference type="Rhea" id="RHEA:57720"/>
        <dbReference type="ChEBI" id="CHEBI:15377"/>
        <dbReference type="ChEBI" id="CHEBI:15378"/>
        <dbReference type="ChEBI" id="CHEBI:30616"/>
        <dbReference type="ChEBI" id="CHEBI:43474"/>
        <dbReference type="ChEBI" id="CHEBI:456216"/>
        <dbReference type="EC" id="7.1.2.2"/>
    </reaction>
</comment>
<comment type="subunit">
    <text evidence="1">F-type ATPases have 2 components, CF(1) - the catalytic core - and CF(0) - the membrane proton channel. CF(1) has five subunits: alpha(3), beta(3), gamma(1), delta(1), epsilon(1). CF(0) has three main subunits: a(1), b(2) and c(9-12). The alpha and beta chains form an alternating ring which encloses part of the gamma chain. CF(1) is attached to CF(0) by a central stalk formed by the gamma and epsilon chains, while a peripheral stalk is formed by the delta and b chains.</text>
</comment>
<comment type="subcellular location">
    <subcellularLocation>
        <location evidence="1">Cell inner membrane</location>
        <topology evidence="1">Peripheral membrane protein</topology>
    </subcellularLocation>
</comment>
<comment type="similarity">
    <text evidence="1">Belongs to the ATPase alpha/beta chains family.</text>
</comment>
<keyword id="KW-0066">ATP synthesis</keyword>
<keyword id="KW-0067">ATP-binding</keyword>
<keyword id="KW-0997">Cell inner membrane</keyword>
<keyword id="KW-1003">Cell membrane</keyword>
<keyword id="KW-0139">CF(1)</keyword>
<keyword id="KW-0375">Hydrogen ion transport</keyword>
<keyword id="KW-0406">Ion transport</keyword>
<keyword id="KW-0472">Membrane</keyword>
<keyword id="KW-0547">Nucleotide-binding</keyword>
<keyword id="KW-1278">Translocase</keyword>
<keyword id="KW-0813">Transport</keyword>
<protein>
    <recommendedName>
        <fullName evidence="1">ATP synthase subunit alpha</fullName>
        <ecNumber evidence="1">7.1.2.2</ecNumber>
    </recommendedName>
    <alternativeName>
        <fullName evidence="1">ATP synthase F1 sector subunit alpha</fullName>
    </alternativeName>
    <alternativeName>
        <fullName evidence="1">F-ATPase subunit alpha</fullName>
    </alternativeName>
</protein>
<sequence>MQLNPAEISELIKSRIEGLGVSANIRNEGTVVSVTDGIVRVHGLSDAMQGEMLEFPPTADGTPSFGLALNLERDSVGAVILGEYEHISEGDTVKCTGRILEVPVGPELIGRVVNALGQPIDGKGPINAKMTDVIEKVAPGVIARKSVDQPMQTGLKSIDSMVPIGRGQRELIIGDRQTGKTAVAIDAIINQKGQNMTCVYVAIGQKASSIKNVVRALEQAGAMDYTIVVAASASESAAMQYVSAYSGCTMGEYFRDRGEDALIVYDDLSKQAVAYRQVSLLLRRPPGREAYPGDVFYLHSRLLERAARVNADYVEAFTKGEVKGKTGSLTALPIIETQAGDVSAFVPTNVISITDGQIFLETNLFNAGIRPAINAGISVSRVGSSAQTKVIKGLSGGIRTDLAQYRELAAFAQFASDLDEATRKQLDRGARVTELLKQAQYSPLPISLMGATLFAVNKGFMDDLEIKKVLPFEHGLHQFLKSSHAALLDKIEKAKALDKDAEAELTAAITSFKKSFA</sequence>
<gene>
    <name evidence="1" type="primary">atpA</name>
    <name type="ordered locus">Vapar_4872</name>
</gene>
<name>ATPA_VARPS</name>
<proteinExistence type="inferred from homology"/>
<dbReference type="EC" id="7.1.2.2" evidence="1"/>
<dbReference type="EMBL" id="CP001635">
    <property type="protein sequence ID" value="ACS21476.1"/>
    <property type="molecule type" value="Genomic_DNA"/>
</dbReference>
<dbReference type="SMR" id="C5CNB3"/>
<dbReference type="STRING" id="543728.Vapar_4872"/>
<dbReference type="KEGG" id="vap:Vapar_4872"/>
<dbReference type="eggNOG" id="COG0056">
    <property type="taxonomic scope" value="Bacteria"/>
</dbReference>
<dbReference type="HOGENOM" id="CLU_010091_2_1_4"/>
<dbReference type="OrthoDB" id="9803053at2"/>
<dbReference type="GO" id="GO:0005886">
    <property type="term" value="C:plasma membrane"/>
    <property type="evidence" value="ECO:0007669"/>
    <property type="project" value="UniProtKB-SubCell"/>
</dbReference>
<dbReference type="GO" id="GO:0045259">
    <property type="term" value="C:proton-transporting ATP synthase complex"/>
    <property type="evidence" value="ECO:0007669"/>
    <property type="project" value="UniProtKB-KW"/>
</dbReference>
<dbReference type="GO" id="GO:0043531">
    <property type="term" value="F:ADP binding"/>
    <property type="evidence" value="ECO:0007669"/>
    <property type="project" value="TreeGrafter"/>
</dbReference>
<dbReference type="GO" id="GO:0005524">
    <property type="term" value="F:ATP binding"/>
    <property type="evidence" value="ECO:0007669"/>
    <property type="project" value="UniProtKB-UniRule"/>
</dbReference>
<dbReference type="GO" id="GO:0046933">
    <property type="term" value="F:proton-transporting ATP synthase activity, rotational mechanism"/>
    <property type="evidence" value="ECO:0007669"/>
    <property type="project" value="UniProtKB-UniRule"/>
</dbReference>
<dbReference type="CDD" id="cd18113">
    <property type="entry name" value="ATP-synt_F1_alpha_C"/>
    <property type="match status" value="1"/>
</dbReference>
<dbReference type="CDD" id="cd18116">
    <property type="entry name" value="ATP-synt_F1_alpha_N"/>
    <property type="match status" value="1"/>
</dbReference>
<dbReference type="CDD" id="cd01132">
    <property type="entry name" value="F1-ATPase_alpha_CD"/>
    <property type="match status" value="1"/>
</dbReference>
<dbReference type="FunFam" id="1.20.150.20:FF:000001">
    <property type="entry name" value="ATP synthase subunit alpha"/>
    <property type="match status" value="1"/>
</dbReference>
<dbReference type="FunFam" id="2.40.30.20:FF:000001">
    <property type="entry name" value="ATP synthase subunit alpha"/>
    <property type="match status" value="1"/>
</dbReference>
<dbReference type="FunFam" id="3.40.50.300:FF:000002">
    <property type="entry name" value="ATP synthase subunit alpha"/>
    <property type="match status" value="1"/>
</dbReference>
<dbReference type="Gene3D" id="2.40.30.20">
    <property type="match status" value="1"/>
</dbReference>
<dbReference type="Gene3D" id="1.20.150.20">
    <property type="entry name" value="ATP synthase alpha/beta chain, C-terminal domain"/>
    <property type="match status" value="1"/>
</dbReference>
<dbReference type="Gene3D" id="3.40.50.300">
    <property type="entry name" value="P-loop containing nucleotide triphosphate hydrolases"/>
    <property type="match status" value="1"/>
</dbReference>
<dbReference type="HAMAP" id="MF_01346">
    <property type="entry name" value="ATP_synth_alpha_bact"/>
    <property type="match status" value="1"/>
</dbReference>
<dbReference type="InterPro" id="IPR023366">
    <property type="entry name" value="ATP_synth_asu-like_sf"/>
</dbReference>
<dbReference type="InterPro" id="IPR000793">
    <property type="entry name" value="ATP_synth_asu_C"/>
</dbReference>
<dbReference type="InterPro" id="IPR038376">
    <property type="entry name" value="ATP_synth_asu_C_sf"/>
</dbReference>
<dbReference type="InterPro" id="IPR033732">
    <property type="entry name" value="ATP_synth_F1_a_nt-bd_dom"/>
</dbReference>
<dbReference type="InterPro" id="IPR005294">
    <property type="entry name" value="ATP_synth_F1_asu"/>
</dbReference>
<dbReference type="InterPro" id="IPR020003">
    <property type="entry name" value="ATPase_a/bsu_AS"/>
</dbReference>
<dbReference type="InterPro" id="IPR004100">
    <property type="entry name" value="ATPase_F1/V1/A1_a/bsu_N"/>
</dbReference>
<dbReference type="InterPro" id="IPR036121">
    <property type="entry name" value="ATPase_F1/V1/A1_a/bsu_N_sf"/>
</dbReference>
<dbReference type="InterPro" id="IPR000194">
    <property type="entry name" value="ATPase_F1/V1/A1_a/bsu_nucl-bd"/>
</dbReference>
<dbReference type="InterPro" id="IPR027417">
    <property type="entry name" value="P-loop_NTPase"/>
</dbReference>
<dbReference type="NCBIfam" id="TIGR00962">
    <property type="entry name" value="atpA"/>
    <property type="match status" value="1"/>
</dbReference>
<dbReference type="NCBIfam" id="NF009884">
    <property type="entry name" value="PRK13343.1"/>
    <property type="match status" value="1"/>
</dbReference>
<dbReference type="PANTHER" id="PTHR48082">
    <property type="entry name" value="ATP SYNTHASE SUBUNIT ALPHA, MITOCHONDRIAL"/>
    <property type="match status" value="1"/>
</dbReference>
<dbReference type="PANTHER" id="PTHR48082:SF2">
    <property type="entry name" value="ATP SYNTHASE SUBUNIT ALPHA, MITOCHONDRIAL"/>
    <property type="match status" value="1"/>
</dbReference>
<dbReference type="Pfam" id="PF00006">
    <property type="entry name" value="ATP-synt_ab"/>
    <property type="match status" value="1"/>
</dbReference>
<dbReference type="Pfam" id="PF00306">
    <property type="entry name" value="ATP-synt_ab_C"/>
    <property type="match status" value="1"/>
</dbReference>
<dbReference type="Pfam" id="PF02874">
    <property type="entry name" value="ATP-synt_ab_N"/>
    <property type="match status" value="1"/>
</dbReference>
<dbReference type="PIRSF" id="PIRSF039088">
    <property type="entry name" value="F_ATPase_subunit_alpha"/>
    <property type="match status" value="1"/>
</dbReference>
<dbReference type="SUPFAM" id="SSF47917">
    <property type="entry name" value="C-terminal domain of alpha and beta subunits of F1 ATP synthase"/>
    <property type="match status" value="1"/>
</dbReference>
<dbReference type="SUPFAM" id="SSF50615">
    <property type="entry name" value="N-terminal domain of alpha and beta subunits of F1 ATP synthase"/>
    <property type="match status" value="1"/>
</dbReference>
<dbReference type="SUPFAM" id="SSF52540">
    <property type="entry name" value="P-loop containing nucleoside triphosphate hydrolases"/>
    <property type="match status" value="1"/>
</dbReference>
<dbReference type="PROSITE" id="PS00152">
    <property type="entry name" value="ATPASE_ALPHA_BETA"/>
    <property type="match status" value="1"/>
</dbReference>